<protein>
    <recommendedName>
        <fullName>ATP-dependent RNA helicase ded1</fullName>
        <ecNumber>3.6.4.13</ecNumber>
    </recommendedName>
</protein>
<evidence type="ECO:0000250" key="1"/>
<evidence type="ECO:0000255" key="2">
    <source>
        <dbReference type="PROSITE-ProRule" id="PRU00541"/>
    </source>
</evidence>
<evidence type="ECO:0000255" key="3">
    <source>
        <dbReference type="PROSITE-ProRule" id="PRU00542"/>
    </source>
</evidence>
<evidence type="ECO:0000256" key="4">
    <source>
        <dbReference type="SAM" id="MobiDB-lite"/>
    </source>
</evidence>
<evidence type="ECO:0000305" key="5"/>
<gene>
    <name type="primary">DED1</name>
    <name type="ordered locus">CNA07860</name>
</gene>
<reference key="1">
    <citation type="journal article" date="2005" name="Science">
        <title>The genome of the basidiomycetous yeast and human pathogen Cryptococcus neoformans.</title>
        <authorList>
            <person name="Loftus B.J."/>
            <person name="Fung E."/>
            <person name="Roncaglia P."/>
            <person name="Rowley D."/>
            <person name="Amedeo P."/>
            <person name="Bruno D."/>
            <person name="Vamathevan J."/>
            <person name="Miranda M."/>
            <person name="Anderson I.J."/>
            <person name="Fraser J.A."/>
            <person name="Allen J.E."/>
            <person name="Bosdet I.E."/>
            <person name="Brent M.R."/>
            <person name="Chiu R."/>
            <person name="Doering T.L."/>
            <person name="Donlin M.J."/>
            <person name="D'Souza C.A."/>
            <person name="Fox D.S."/>
            <person name="Grinberg V."/>
            <person name="Fu J."/>
            <person name="Fukushima M."/>
            <person name="Haas B.J."/>
            <person name="Huang J.C."/>
            <person name="Janbon G."/>
            <person name="Jones S.J.M."/>
            <person name="Koo H.L."/>
            <person name="Krzywinski M.I."/>
            <person name="Kwon-Chung K.J."/>
            <person name="Lengeler K.B."/>
            <person name="Maiti R."/>
            <person name="Marra M.A."/>
            <person name="Marra R.E."/>
            <person name="Mathewson C.A."/>
            <person name="Mitchell T.G."/>
            <person name="Pertea M."/>
            <person name="Riggs F.R."/>
            <person name="Salzberg S.L."/>
            <person name="Schein J.E."/>
            <person name="Shvartsbeyn A."/>
            <person name="Shin H."/>
            <person name="Shumway M."/>
            <person name="Specht C.A."/>
            <person name="Suh B.B."/>
            <person name="Tenney A."/>
            <person name="Utterback T.R."/>
            <person name="Wickes B.L."/>
            <person name="Wortman J.R."/>
            <person name="Wye N.H."/>
            <person name="Kronstad J.W."/>
            <person name="Lodge J.K."/>
            <person name="Heitman J."/>
            <person name="Davis R.W."/>
            <person name="Fraser C.M."/>
            <person name="Hyman R.W."/>
        </authorList>
    </citation>
    <scope>NUCLEOTIDE SEQUENCE [LARGE SCALE GENOMIC DNA]</scope>
    <source>
        <strain>JEC21 / ATCC MYA-565</strain>
    </source>
</reference>
<dbReference type="EC" id="3.6.4.13"/>
<dbReference type="EMBL" id="AE017341">
    <property type="protein sequence ID" value="AAW41314.1"/>
    <property type="molecule type" value="Genomic_DNA"/>
</dbReference>
<dbReference type="RefSeq" id="XP_567133.1">
    <property type="nucleotide sequence ID" value="XM_567133.1"/>
</dbReference>
<dbReference type="SMR" id="P0CQ74"/>
<dbReference type="FunCoup" id="P0CQ74">
    <property type="interactions" value="616"/>
</dbReference>
<dbReference type="STRING" id="214684.P0CQ74"/>
<dbReference type="PaxDb" id="214684-P0CQ74"/>
<dbReference type="EnsemblFungi" id="AAW41314">
    <property type="protein sequence ID" value="AAW41314"/>
    <property type="gene ID" value="CNA07860"/>
</dbReference>
<dbReference type="GeneID" id="3253536"/>
<dbReference type="KEGG" id="cne:CNA07860"/>
<dbReference type="VEuPathDB" id="FungiDB:CNA07860"/>
<dbReference type="eggNOG" id="KOG0335">
    <property type="taxonomic scope" value="Eukaryota"/>
</dbReference>
<dbReference type="HOGENOM" id="CLU_003041_16_3_1"/>
<dbReference type="InParanoid" id="P0CQ74"/>
<dbReference type="OMA" id="CYRSWVR"/>
<dbReference type="OrthoDB" id="196131at2759"/>
<dbReference type="Proteomes" id="UP000002149">
    <property type="component" value="Chromosome 1"/>
</dbReference>
<dbReference type="GO" id="GO:0010494">
    <property type="term" value="C:cytoplasmic stress granule"/>
    <property type="evidence" value="ECO:0007669"/>
    <property type="project" value="EnsemblFungi"/>
</dbReference>
<dbReference type="GO" id="GO:0005634">
    <property type="term" value="C:nucleus"/>
    <property type="evidence" value="ECO:0000318"/>
    <property type="project" value="GO_Central"/>
</dbReference>
<dbReference type="GO" id="GO:0005681">
    <property type="term" value="C:spliceosomal complex"/>
    <property type="evidence" value="ECO:0007669"/>
    <property type="project" value="EnsemblFungi"/>
</dbReference>
<dbReference type="GO" id="GO:0005524">
    <property type="term" value="F:ATP binding"/>
    <property type="evidence" value="ECO:0007669"/>
    <property type="project" value="UniProtKB-KW"/>
</dbReference>
<dbReference type="GO" id="GO:0016887">
    <property type="term" value="F:ATP hydrolysis activity"/>
    <property type="evidence" value="ECO:0007669"/>
    <property type="project" value="RHEA"/>
</dbReference>
<dbReference type="GO" id="GO:0031370">
    <property type="term" value="F:eukaryotic initiation factor 4G binding"/>
    <property type="evidence" value="ECO:0007669"/>
    <property type="project" value="EnsemblFungi"/>
</dbReference>
<dbReference type="GO" id="GO:0051880">
    <property type="term" value="F:G-quadruplex DNA binding"/>
    <property type="evidence" value="ECO:0007669"/>
    <property type="project" value="EnsemblFungi"/>
</dbReference>
<dbReference type="GO" id="GO:0002151">
    <property type="term" value="F:G-quadruplex RNA binding"/>
    <property type="evidence" value="ECO:0007669"/>
    <property type="project" value="EnsemblFungi"/>
</dbReference>
<dbReference type="GO" id="GO:0003729">
    <property type="term" value="F:mRNA binding"/>
    <property type="evidence" value="ECO:0000318"/>
    <property type="project" value="GO_Central"/>
</dbReference>
<dbReference type="GO" id="GO:0003724">
    <property type="term" value="F:RNA helicase activity"/>
    <property type="evidence" value="ECO:0000318"/>
    <property type="project" value="GO_Central"/>
</dbReference>
<dbReference type="GO" id="GO:0033592">
    <property type="term" value="F:RNA strand annealing activity"/>
    <property type="evidence" value="ECO:0007669"/>
    <property type="project" value="EnsemblFungi"/>
</dbReference>
<dbReference type="GO" id="GO:0003743">
    <property type="term" value="F:translation initiation factor activity"/>
    <property type="evidence" value="ECO:0007669"/>
    <property type="project" value="UniProtKB-KW"/>
</dbReference>
<dbReference type="GO" id="GO:0002183">
    <property type="term" value="P:cytoplasmic translational initiation"/>
    <property type="evidence" value="ECO:0007669"/>
    <property type="project" value="EnsemblFungi"/>
</dbReference>
<dbReference type="GO" id="GO:1990625">
    <property type="term" value="P:negative regulation of cytoplasmic translational initiation in response to stress"/>
    <property type="evidence" value="ECO:0007669"/>
    <property type="project" value="EnsemblFungi"/>
</dbReference>
<dbReference type="GO" id="GO:1901195">
    <property type="term" value="P:positive regulation of formation of translation preinitiation complex"/>
    <property type="evidence" value="ECO:0007669"/>
    <property type="project" value="EnsemblFungi"/>
</dbReference>
<dbReference type="GO" id="GO:0031047">
    <property type="term" value="P:regulatory ncRNA-mediated gene silencing"/>
    <property type="evidence" value="ECO:0007669"/>
    <property type="project" value="EnsemblFungi"/>
</dbReference>
<dbReference type="GO" id="GO:0000390">
    <property type="term" value="P:spliceosomal complex disassembly"/>
    <property type="evidence" value="ECO:0007669"/>
    <property type="project" value="EnsemblFungi"/>
</dbReference>
<dbReference type="CDD" id="cd17967">
    <property type="entry name" value="DEADc_DDX3_DDX4"/>
    <property type="match status" value="1"/>
</dbReference>
<dbReference type="CDD" id="cd18787">
    <property type="entry name" value="SF2_C_DEAD"/>
    <property type="match status" value="1"/>
</dbReference>
<dbReference type="FunFam" id="3.40.50.300:FF:000008">
    <property type="entry name" value="ATP-dependent RNA helicase RhlB"/>
    <property type="match status" value="1"/>
</dbReference>
<dbReference type="FunFam" id="3.40.50.300:FF:000397">
    <property type="entry name" value="Probable ATP-dependent RNA helicase DDX4"/>
    <property type="match status" value="1"/>
</dbReference>
<dbReference type="Gene3D" id="3.40.50.300">
    <property type="entry name" value="P-loop containing nucleotide triphosphate hydrolases"/>
    <property type="match status" value="2"/>
</dbReference>
<dbReference type="InterPro" id="IPR011545">
    <property type="entry name" value="DEAD/DEAH_box_helicase_dom"/>
</dbReference>
<dbReference type="InterPro" id="IPR044763">
    <property type="entry name" value="Ded1/Dbp1_DEADc"/>
</dbReference>
<dbReference type="InterPro" id="IPR014001">
    <property type="entry name" value="Helicase_ATP-bd"/>
</dbReference>
<dbReference type="InterPro" id="IPR001650">
    <property type="entry name" value="Helicase_C-like"/>
</dbReference>
<dbReference type="InterPro" id="IPR027417">
    <property type="entry name" value="P-loop_NTPase"/>
</dbReference>
<dbReference type="InterPro" id="IPR000629">
    <property type="entry name" value="RNA-helicase_DEAD-box_CS"/>
</dbReference>
<dbReference type="InterPro" id="IPR014014">
    <property type="entry name" value="RNA_helicase_DEAD_Q_motif"/>
</dbReference>
<dbReference type="PANTHER" id="PTHR47958">
    <property type="entry name" value="ATP-DEPENDENT RNA HELICASE DBP3"/>
    <property type="match status" value="1"/>
</dbReference>
<dbReference type="Pfam" id="PF00270">
    <property type="entry name" value="DEAD"/>
    <property type="match status" value="1"/>
</dbReference>
<dbReference type="Pfam" id="PF00271">
    <property type="entry name" value="Helicase_C"/>
    <property type="match status" value="1"/>
</dbReference>
<dbReference type="SMART" id="SM00487">
    <property type="entry name" value="DEXDc"/>
    <property type="match status" value="1"/>
</dbReference>
<dbReference type="SMART" id="SM00490">
    <property type="entry name" value="HELICc"/>
    <property type="match status" value="1"/>
</dbReference>
<dbReference type="SUPFAM" id="SSF52540">
    <property type="entry name" value="P-loop containing nucleoside triphosphate hydrolases"/>
    <property type="match status" value="1"/>
</dbReference>
<dbReference type="PROSITE" id="PS00039">
    <property type="entry name" value="DEAD_ATP_HELICASE"/>
    <property type="match status" value="1"/>
</dbReference>
<dbReference type="PROSITE" id="PS51192">
    <property type="entry name" value="HELICASE_ATP_BIND_1"/>
    <property type="match status" value="1"/>
</dbReference>
<dbReference type="PROSITE" id="PS51194">
    <property type="entry name" value="HELICASE_CTER"/>
    <property type="match status" value="1"/>
</dbReference>
<dbReference type="PROSITE" id="PS51195">
    <property type="entry name" value="Q_MOTIF"/>
    <property type="match status" value="1"/>
</dbReference>
<proteinExistence type="inferred from homology"/>
<keyword id="KW-0067">ATP-binding</keyword>
<keyword id="KW-0963">Cytoplasm</keyword>
<keyword id="KW-0347">Helicase</keyword>
<keyword id="KW-0378">Hydrolase</keyword>
<keyword id="KW-0396">Initiation factor</keyword>
<keyword id="KW-0547">Nucleotide-binding</keyword>
<keyword id="KW-0648">Protein biosynthesis</keyword>
<keyword id="KW-1185">Reference proteome</keyword>
<keyword id="KW-0694">RNA-binding</keyword>
<feature type="chain" id="PRO_0000232157" description="ATP-dependent RNA helicase ded1">
    <location>
        <begin position="1"/>
        <end position="637"/>
    </location>
</feature>
<feature type="domain" description="Helicase ATP-binding" evidence="2">
    <location>
        <begin position="191"/>
        <end position="384"/>
    </location>
</feature>
<feature type="domain" description="Helicase C-terminal" evidence="3">
    <location>
        <begin position="395"/>
        <end position="556"/>
    </location>
</feature>
<feature type="region of interest" description="Disordered" evidence="4">
    <location>
        <begin position="15"/>
        <end position="68"/>
    </location>
</feature>
<feature type="region of interest" description="Disordered" evidence="4">
    <location>
        <begin position="560"/>
        <end position="598"/>
    </location>
</feature>
<feature type="short sequence motif" description="Q motif">
    <location>
        <begin position="160"/>
        <end position="188"/>
    </location>
</feature>
<feature type="short sequence motif" description="DEAD box">
    <location>
        <begin position="328"/>
        <end position="331"/>
    </location>
</feature>
<feature type="compositionally biased region" description="Polar residues" evidence="4">
    <location>
        <begin position="15"/>
        <end position="25"/>
    </location>
</feature>
<feature type="compositionally biased region" description="Gly residues" evidence="4">
    <location>
        <begin position="561"/>
        <end position="585"/>
    </location>
</feature>
<feature type="binding site" evidence="2">
    <location>
        <begin position="204"/>
        <end position="211"/>
    </location>
    <ligand>
        <name>ATP</name>
        <dbReference type="ChEBI" id="CHEBI:30616"/>
    </ligand>
</feature>
<organism>
    <name type="scientific">Cryptococcus neoformans var. neoformans serotype D (strain JEC21 / ATCC MYA-565)</name>
    <name type="common">Filobasidiella neoformans</name>
    <dbReference type="NCBI Taxonomy" id="214684"/>
    <lineage>
        <taxon>Eukaryota</taxon>
        <taxon>Fungi</taxon>
        <taxon>Dikarya</taxon>
        <taxon>Basidiomycota</taxon>
        <taxon>Agaricomycotina</taxon>
        <taxon>Tremellomycetes</taxon>
        <taxon>Tremellales</taxon>
        <taxon>Cryptococcaceae</taxon>
        <taxon>Cryptococcus</taxon>
        <taxon>Cryptococcus neoformans species complex</taxon>
    </lineage>
</organism>
<sequence length="637" mass="68050">MAATDVNGLASQMNSVNLNGASQKPQKPAYVPPHLRNRAAPPAAVPPAAPAAYRPSPTGLPTPATTPPTRHIVPAAVAEDDVGGWGAQPRVRKTFEHGAPPGFGSWKNGQHVVGARNTRMEKEMYGEVGDGLHQATGINFDKYADIPVEVSGKGVPEPVTEFTNPPINPVLLENVKYARYATPTPVQKYSIPIVADGRDLMACAQTGSGKTGGFLFPILSALFTYGPSTPPVEQDTGYGYRRTKKVYPTALVLAPTRELVSQIHEEARKFAYRSWVRPAVVYGGADIGSQMRALDRGCDLLSATPGRLVDLIERGKISLANVKYLVLDEADRMLDMGFEPQIRRIVDEEDMPGVLERQTLMFSATFPREIQNLARSFLKEYIFLTVGRVGSTSENITQRVEYVDDQDKRSLLLDLLLAEQSGGLILVFVETKRMADTLCDFLCSRRHNATSIHGDRTQREREAALYAFKSGRAPILVATAVAARGLDIPNVTHVILYDLPNDVAEYTHRIGRTGRAGNVGTSTAFFNRGNTNIGKDLIELLKEANQEVPQWLVEISSERSYGGGGGGGYKGSRGRSTGGGGGARLGGRDMRQGGGGYGGGGRTSGYGGGYGGGGGGAGWGSGGGFPPAGGDSGASWW</sequence>
<name>DED1_CRYNJ</name>
<accession>P0CQ74</accession>
<accession>Q55YR5</accession>
<accession>Q5KN36</accession>
<comment type="function">
    <text evidence="1">ATP-binding RNA helicase involved in translation initiation. Remodels RNA in response to ADP and ATP concentrations by facilitating disruption, but also formation of RNA duplexes (By similarity).</text>
</comment>
<comment type="catalytic activity">
    <reaction>
        <text>ATP + H2O = ADP + phosphate + H(+)</text>
        <dbReference type="Rhea" id="RHEA:13065"/>
        <dbReference type="ChEBI" id="CHEBI:15377"/>
        <dbReference type="ChEBI" id="CHEBI:15378"/>
        <dbReference type="ChEBI" id="CHEBI:30616"/>
        <dbReference type="ChEBI" id="CHEBI:43474"/>
        <dbReference type="ChEBI" id="CHEBI:456216"/>
        <dbReference type="EC" id="3.6.4.13"/>
    </reaction>
</comment>
<comment type="subcellular location">
    <subcellularLocation>
        <location evidence="1">Cytoplasm</location>
    </subcellularLocation>
</comment>
<comment type="domain">
    <text>The Q motif is unique to and characteristic of the DEAD box family of RNA helicases and controls ATP binding and hydrolysis.</text>
</comment>
<comment type="similarity">
    <text evidence="5">Belongs to the DEAD box helicase family. DDX3/DED1 subfamily.</text>
</comment>